<proteinExistence type="evidence at protein level"/>
<organism>
    <name type="scientific">Phytophthora drechsleri</name>
    <dbReference type="NCBI Taxonomy" id="4794"/>
    <lineage>
        <taxon>Eukaryota</taxon>
        <taxon>Sar</taxon>
        <taxon>Stramenopiles</taxon>
        <taxon>Oomycota</taxon>
        <taxon>Peronosporales</taxon>
        <taxon>Peronosporaceae</taxon>
        <taxon>Phytophthora</taxon>
    </lineage>
</organism>
<evidence type="ECO:0000250" key="1"/>
<evidence type="ECO:0000305" key="2"/>
<accession>P35697</accession>
<feature type="chain" id="PRO_0000185439" description="Beta-elicitin DRE-beta">
    <location>
        <begin position="1"/>
        <end position="98"/>
    </location>
</feature>
<feature type="disulfide bond" evidence="1">
    <location>
        <begin position="3"/>
        <end position="71"/>
    </location>
</feature>
<feature type="disulfide bond" evidence="1">
    <location>
        <begin position="27"/>
        <end position="56"/>
    </location>
</feature>
<feature type="disulfide bond" evidence="1">
    <location>
        <begin position="51"/>
        <end position="95"/>
    </location>
</feature>
<feature type="sequence variant">
    <original>T</original>
    <variation>A</variation>
    <location>
        <position position="2"/>
    </location>
</feature>
<name>ELIB_PHYDR</name>
<comment type="function">
    <text>Induces local and distal defense responses (incompatible hypersensitive reaction) in plants from the solanaceae and cruciferae families. Elicits leaf necrosis and causes the accumulation of pathogenesis-related proteins. Might interact with the lipidic molecules of the plasma membrane.</text>
</comment>
<comment type="subcellular location">
    <subcellularLocation>
        <location>Secreted</location>
    </subcellularLocation>
</comment>
<comment type="similarity">
    <text evidence="2">Belongs to the elicitin family.</text>
</comment>
<dbReference type="SMR" id="P35697"/>
<dbReference type="GO" id="GO:0005576">
    <property type="term" value="C:extracellular region"/>
    <property type="evidence" value="ECO:0007669"/>
    <property type="project" value="UniProtKB-SubCell"/>
</dbReference>
<dbReference type="GO" id="GO:0052040">
    <property type="term" value="P:symbiont-mediated perturbation of host programmed cell death"/>
    <property type="evidence" value="ECO:0007669"/>
    <property type="project" value="UniProtKB-KW"/>
</dbReference>
<dbReference type="Gene3D" id="1.10.239.10">
    <property type="entry name" value="Elicitin domain"/>
    <property type="match status" value="1"/>
</dbReference>
<dbReference type="InterPro" id="IPR002200">
    <property type="entry name" value="Elicitin"/>
</dbReference>
<dbReference type="InterPro" id="IPR036470">
    <property type="entry name" value="Elicitin_sf"/>
</dbReference>
<dbReference type="Pfam" id="PF00964">
    <property type="entry name" value="Elicitin"/>
    <property type="match status" value="1"/>
</dbReference>
<dbReference type="PRINTS" id="PR00948">
    <property type="entry name" value="ELICITIN"/>
</dbReference>
<dbReference type="SMART" id="SM01187">
    <property type="entry name" value="Elicitin"/>
    <property type="match status" value="1"/>
</dbReference>
<dbReference type="SUPFAM" id="SSF48647">
    <property type="entry name" value="Fungal elicitin"/>
    <property type="match status" value="1"/>
</dbReference>
<sequence>TTCTSTQQTAAYTTLVSILSDSSFNKCASDSGYSMLTAKALPTTAQYKLMCASTACNTMIKKIVSLNPPNCDLTVPTSGLVLNVYEYANGFSTKCASL</sequence>
<keyword id="KW-0903">Direct protein sequencing</keyword>
<keyword id="KW-1015">Disulfide bond</keyword>
<keyword id="KW-0928">Hypersensitive response elicitation</keyword>
<keyword id="KW-0964">Secreted</keyword>
<protein>
    <recommendedName>
        <fullName>Beta-elicitin DRE-beta</fullName>
    </recommendedName>
</protein>
<reference key="1">
    <citation type="journal article" date="1992" name="Phytochemistry">
        <title>Structures of elicitin isoforms secreted by Phytophthora drechsleri.</title>
        <authorList>
            <person name="Huet J.-C."/>
            <person name="Nespoulous C."/>
            <person name="Pernollet J.-C."/>
        </authorList>
    </citation>
    <scope>PROTEIN SEQUENCE</scope>
</reference>